<dbReference type="EMBL" id="CP000915">
    <property type="protein sequence ID" value="ACD30314.1"/>
    <property type="molecule type" value="Genomic_DNA"/>
</dbReference>
<dbReference type="SMR" id="B2SFG1"/>
<dbReference type="KEGG" id="ftm:FTM_0239"/>
<dbReference type="HOGENOM" id="CLU_061989_0_0_6"/>
<dbReference type="GO" id="GO:0005829">
    <property type="term" value="C:cytosol"/>
    <property type="evidence" value="ECO:0007669"/>
    <property type="project" value="TreeGrafter"/>
</dbReference>
<dbReference type="GO" id="GO:0033194">
    <property type="term" value="P:response to hydroperoxide"/>
    <property type="evidence" value="ECO:0007669"/>
    <property type="project" value="TreeGrafter"/>
</dbReference>
<dbReference type="HAMAP" id="MF_00652">
    <property type="entry name" value="UPF0246"/>
    <property type="match status" value="1"/>
</dbReference>
<dbReference type="InterPro" id="IPR005583">
    <property type="entry name" value="YaaA"/>
</dbReference>
<dbReference type="NCBIfam" id="NF002542">
    <property type="entry name" value="PRK02101.1-3"/>
    <property type="match status" value="1"/>
</dbReference>
<dbReference type="PANTHER" id="PTHR30283:SF4">
    <property type="entry name" value="PEROXIDE STRESS RESISTANCE PROTEIN YAAA"/>
    <property type="match status" value="1"/>
</dbReference>
<dbReference type="PANTHER" id="PTHR30283">
    <property type="entry name" value="PEROXIDE STRESS RESPONSE PROTEIN YAAA"/>
    <property type="match status" value="1"/>
</dbReference>
<dbReference type="Pfam" id="PF03883">
    <property type="entry name" value="H2O2_YaaD"/>
    <property type="match status" value="1"/>
</dbReference>
<evidence type="ECO:0000255" key="1">
    <source>
        <dbReference type="HAMAP-Rule" id="MF_00652"/>
    </source>
</evidence>
<feature type="chain" id="PRO_1000131122" description="UPF0246 protein FTM_0239">
    <location>
        <begin position="1"/>
        <end position="254"/>
    </location>
</feature>
<name>Y239_FRATM</name>
<accession>B2SFG1</accession>
<reference key="1">
    <citation type="journal article" date="2009" name="PLoS Pathog.">
        <title>Molecular evolutionary consequences of niche restriction in Francisella tularensis, a facultative intracellular pathogen.</title>
        <authorList>
            <person name="Larsson P."/>
            <person name="Elfsmark D."/>
            <person name="Svensson K."/>
            <person name="Wikstroem P."/>
            <person name="Forsman M."/>
            <person name="Brettin T."/>
            <person name="Keim P."/>
            <person name="Johansson A."/>
        </authorList>
    </citation>
    <scope>NUCLEOTIDE SEQUENCE [LARGE SCALE GENOMIC DNA]</scope>
    <source>
        <strain>FSC147</strain>
    </source>
</reference>
<comment type="similarity">
    <text evidence="1">Belongs to the UPF0246 family.</text>
</comment>
<gene>
    <name type="ordered locus">FTM_0239</name>
</gene>
<sequence>MIIVISPAKSQNFEPIKTAYQFTQPIFKQQIIKLINTLKHYEVEEIEKLMKISPKLAEEVFAKHNSFNPNKYDNSNAKAAIFTFSGDVYKGLEADTLDNKTIEYAQNHLLMLSGLYGLVRPLDLIQAYRLEMGTNIKIDGKILHKYWQDKITTQLNEYFSQQQNKILINLASNEYSQAIDKKSLAVKWLDIDFKENKAGAYKTIGIHAKKARGLITRYILENRIENVSDIKKFNVAGYQFNPDFSDENLLCFTR</sequence>
<proteinExistence type="inferred from homology"/>
<protein>
    <recommendedName>
        <fullName evidence="1">UPF0246 protein FTM_0239</fullName>
    </recommendedName>
</protein>
<organism>
    <name type="scientific">Francisella tularensis subsp. mediasiatica (strain FSC147)</name>
    <dbReference type="NCBI Taxonomy" id="441952"/>
    <lineage>
        <taxon>Bacteria</taxon>
        <taxon>Pseudomonadati</taxon>
        <taxon>Pseudomonadota</taxon>
        <taxon>Gammaproteobacteria</taxon>
        <taxon>Thiotrichales</taxon>
        <taxon>Francisellaceae</taxon>
        <taxon>Francisella</taxon>
    </lineage>
</organism>